<name>GLMM_BURVG</name>
<sequence>MGRRYFGTDGIRGTVGDTPITPDFVLRLGYAAGKVLAGAADGATGARPTVLIGKDTRVSGYMLEAALEAGFSAAGVDVMLAGPMPTPGVAYLTRALRLSAGVVISASHNPYQDNGIKFFSADGNKLPDETEAEIEAWLDKPLECASSDRLGKARRLDDAAGRYIEFCKSTFPAAYDLRGLKLVIDCAHGAAYQIAPHVFHELGADVIPIGVAPNGFNINDGVGATAPDALVRAVRANHADLGIALDGDADRLQVVDSSGRLFNGDELLYVLVKDRIATAGKVEGAVGTLMTNLAVEVALQREGVEFVRAAVGDRYVLEQLRERGWQLGAEGSGHILSLDRHSTGDGIVSALLVLAALKRSGRTLAQMLDGVTLFPQKLINVRMKPGADWKGSASIRAAIDAAESALAGHGRVLIRASGTEPVLRVMVEAQQAADATRHAEAIADAVREATS</sequence>
<gene>
    <name evidence="1" type="primary">glmM</name>
    <name type="ordered locus">Bcep1808_1252</name>
</gene>
<proteinExistence type="inferred from homology"/>
<feature type="chain" id="PRO_1000068893" description="Phosphoglucosamine mutase">
    <location>
        <begin position="1"/>
        <end position="451"/>
    </location>
</feature>
<feature type="active site" description="Phosphoserine intermediate" evidence="1">
    <location>
        <position position="107"/>
    </location>
</feature>
<feature type="binding site" description="via phosphate group" evidence="1">
    <location>
        <position position="107"/>
    </location>
    <ligand>
        <name>Mg(2+)</name>
        <dbReference type="ChEBI" id="CHEBI:18420"/>
    </ligand>
</feature>
<feature type="binding site" evidence="1">
    <location>
        <position position="246"/>
    </location>
    <ligand>
        <name>Mg(2+)</name>
        <dbReference type="ChEBI" id="CHEBI:18420"/>
    </ligand>
</feature>
<feature type="binding site" evidence="1">
    <location>
        <position position="248"/>
    </location>
    <ligand>
        <name>Mg(2+)</name>
        <dbReference type="ChEBI" id="CHEBI:18420"/>
    </ligand>
</feature>
<feature type="binding site" evidence="1">
    <location>
        <position position="250"/>
    </location>
    <ligand>
        <name>Mg(2+)</name>
        <dbReference type="ChEBI" id="CHEBI:18420"/>
    </ligand>
</feature>
<feature type="modified residue" description="Phosphoserine" evidence="1">
    <location>
        <position position="107"/>
    </location>
</feature>
<dbReference type="EC" id="5.4.2.10" evidence="1"/>
<dbReference type="EMBL" id="CP000614">
    <property type="protein sequence ID" value="ABO54262.1"/>
    <property type="molecule type" value="Genomic_DNA"/>
</dbReference>
<dbReference type="SMR" id="A4JDA9"/>
<dbReference type="KEGG" id="bvi:Bcep1808_1252"/>
<dbReference type="eggNOG" id="COG1109">
    <property type="taxonomic scope" value="Bacteria"/>
</dbReference>
<dbReference type="HOGENOM" id="CLU_016950_7_0_4"/>
<dbReference type="Proteomes" id="UP000002287">
    <property type="component" value="Chromosome 1"/>
</dbReference>
<dbReference type="GO" id="GO:0005829">
    <property type="term" value="C:cytosol"/>
    <property type="evidence" value="ECO:0007669"/>
    <property type="project" value="TreeGrafter"/>
</dbReference>
<dbReference type="GO" id="GO:0000287">
    <property type="term" value="F:magnesium ion binding"/>
    <property type="evidence" value="ECO:0007669"/>
    <property type="project" value="UniProtKB-UniRule"/>
</dbReference>
<dbReference type="GO" id="GO:0008966">
    <property type="term" value="F:phosphoglucosamine mutase activity"/>
    <property type="evidence" value="ECO:0007669"/>
    <property type="project" value="UniProtKB-UniRule"/>
</dbReference>
<dbReference type="GO" id="GO:0004615">
    <property type="term" value="F:phosphomannomutase activity"/>
    <property type="evidence" value="ECO:0007669"/>
    <property type="project" value="TreeGrafter"/>
</dbReference>
<dbReference type="GO" id="GO:0005975">
    <property type="term" value="P:carbohydrate metabolic process"/>
    <property type="evidence" value="ECO:0007669"/>
    <property type="project" value="InterPro"/>
</dbReference>
<dbReference type="GO" id="GO:0009252">
    <property type="term" value="P:peptidoglycan biosynthetic process"/>
    <property type="evidence" value="ECO:0007669"/>
    <property type="project" value="TreeGrafter"/>
</dbReference>
<dbReference type="GO" id="GO:0006048">
    <property type="term" value="P:UDP-N-acetylglucosamine biosynthetic process"/>
    <property type="evidence" value="ECO:0007669"/>
    <property type="project" value="TreeGrafter"/>
</dbReference>
<dbReference type="CDD" id="cd05802">
    <property type="entry name" value="GlmM"/>
    <property type="match status" value="1"/>
</dbReference>
<dbReference type="FunFam" id="3.30.310.50:FF:000001">
    <property type="entry name" value="Phosphoglucosamine mutase"/>
    <property type="match status" value="1"/>
</dbReference>
<dbReference type="FunFam" id="3.40.120.10:FF:000001">
    <property type="entry name" value="Phosphoglucosamine mutase"/>
    <property type="match status" value="1"/>
</dbReference>
<dbReference type="FunFam" id="3.40.120.10:FF:000003">
    <property type="entry name" value="Phosphoglucosamine mutase"/>
    <property type="match status" value="1"/>
</dbReference>
<dbReference type="Gene3D" id="3.40.120.10">
    <property type="entry name" value="Alpha-D-Glucose-1,6-Bisphosphate, subunit A, domain 3"/>
    <property type="match status" value="3"/>
</dbReference>
<dbReference type="Gene3D" id="3.30.310.50">
    <property type="entry name" value="Alpha-D-phosphohexomutase, C-terminal domain"/>
    <property type="match status" value="1"/>
</dbReference>
<dbReference type="HAMAP" id="MF_01554_B">
    <property type="entry name" value="GlmM_B"/>
    <property type="match status" value="1"/>
</dbReference>
<dbReference type="InterPro" id="IPR005844">
    <property type="entry name" value="A-D-PHexomutase_a/b/a-I"/>
</dbReference>
<dbReference type="InterPro" id="IPR016055">
    <property type="entry name" value="A-D-PHexomutase_a/b/a-I/II/III"/>
</dbReference>
<dbReference type="InterPro" id="IPR005845">
    <property type="entry name" value="A-D-PHexomutase_a/b/a-II"/>
</dbReference>
<dbReference type="InterPro" id="IPR005846">
    <property type="entry name" value="A-D-PHexomutase_a/b/a-III"/>
</dbReference>
<dbReference type="InterPro" id="IPR005843">
    <property type="entry name" value="A-D-PHexomutase_C"/>
</dbReference>
<dbReference type="InterPro" id="IPR036900">
    <property type="entry name" value="A-D-PHexomutase_C_sf"/>
</dbReference>
<dbReference type="InterPro" id="IPR016066">
    <property type="entry name" value="A-D-PHexomutase_CS"/>
</dbReference>
<dbReference type="InterPro" id="IPR005841">
    <property type="entry name" value="Alpha-D-phosphohexomutase_SF"/>
</dbReference>
<dbReference type="InterPro" id="IPR006352">
    <property type="entry name" value="GlmM_bact"/>
</dbReference>
<dbReference type="InterPro" id="IPR050060">
    <property type="entry name" value="Phosphoglucosamine_mutase"/>
</dbReference>
<dbReference type="NCBIfam" id="TIGR01455">
    <property type="entry name" value="glmM"/>
    <property type="match status" value="1"/>
</dbReference>
<dbReference type="NCBIfam" id="NF008139">
    <property type="entry name" value="PRK10887.1"/>
    <property type="match status" value="1"/>
</dbReference>
<dbReference type="PANTHER" id="PTHR42946:SF1">
    <property type="entry name" value="PHOSPHOGLUCOMUTASE (ALPHA-D-GLUCOSE-1,6-BISPHOSPHATE-DEPENDENT)"/>
    <property type="match status" value="1"/>
</dbReference>
<dbReference type="PANTHER" id="PTHR42946">
    <property type="entry name" value="PHOSPHOHEXOSE MUTASE"/>
    <property type="match status" value="1"/>
</dbReference>
<dbReference type="Pfam" id="PF02878">
    <property type="entry name" value="PGM_PMM_I"/>
    <property type="match status" value="1"/>
</dbReference>
<dbReference type="Pfam" id="PF02879">
    <property type="entry name" value="PGM_PMM_II"/>
    <property type="match status" value="1"/>
</dbReference>
<dbReference type="Pfam" id="PF02880">
    <property type="entry name" value="PGM_PMM_III"/>
    <property type="match status" value="1"/>
</dbReference>
<dbReference type="Pfam" id="PF00408">
    <property type="entry name" value="PGM_PMM_IV"/>
    <property type="match status" value="1"/>
</dbReference>
<dbReference type="PRINTS" id="PR00509">
    <property type="entry name" value="PGMPMM"/>
</dbReference>
<dbReference type="SUPFAM" id="SSF55957">
    <property type="entry name" value="Phosphoglucomutase, C-terminal domain"/>
    <property type="match status" value="1"/>
</dbReference>
<dbReference type="SUPFAM" id="SSF53738">
    <property type="entry name" value="Phosphoglucomutase, first 3 domains"/>
    <property type="match status" value="3"/>
</dbReference>
<dbReference type="PROSITE" id="PS00710">
    <property type="entry name" value="PGM_PMM"/>
    <property type="match status" value="1"/>
</dbReference>
<keyword id="KW-0413">Isomerase</keyword>
<keyword id="KW-0460">Magnesium</keyword>
<keyword id="KW-0479">Metal-binding</keyword>
<keyword id="KW-0597">Phosphoprotein</keyword>
<accession>A4JDA9</accession>
<protein>
    <recommendedName>
        <fullName evidence="1">Phosphoglucosamine mutase</fullName>
        <ecNumber evidence="1">5.4.2.10</ecNumber>
    </recommendedName>
</protein>
<organism>
    <name type="scientific">Burkholderia vietnamiensis (strain G4 / LMG 22486)</name>
    <name type="common">Burkholderia cepacia (strain R1808)</name>
    <dbReference type="NCBI Taxonomy" id="269482"/>
    <lineage>
        <taxon>Bacteria</taxon>
        <taxon>Pseudomonadati</taxon>
        <taxon>Pseudomonadota</taxon>
        <taxon>Betaproteobacteria</taxon>
        <taxon>Burkholderiales</taxon>
        <taxon>Burkholderiaceae</taxon>
        <taxon>Burkholderia</taxon>
        <taxon>Burkholderia cepacia complex</taxon>
    </lineage>
</organism>
<comment type="function">
    <text evidence="1">Catalyzes the conversion of glucosamine-6-phosphate to glucosamine-1-phosphate.</text>
</comment>
<comment type="catalytic activity">
    <reaction evidence="1">
        <text>alpha-D-glucosamine 1-phosphate = D-glucosamine 6-phosphate</text>
        <dbReference type="Rhea" id="RHEA:23424"/>
        <dbReference type="ChEBI" id="CHEBI:58516"/>
        <dbReference type="ChEBI" id="CHEBI:58725"/>
        <dbReference type="EC" id="5.4.2.10"/>
    </reaction>
</comment>
<comment type="cofactor">
    <cofactor evidence="1">
        <name>Mg(2+)</name>
        <dbReference type="ChEBI" id="CHEBI:18420"/>
    </cofactor>
    <text evidence="1">Binds 1 Mg(2+) ion per subunit.</text>
</comment>
<comment type="PTM">
    <text evidence="1">Activated by phosphorylation.</text>
</comment>
<comment type="similarity">
    <text evidence="1">Belongs to the phosphohexose mutase family.</text>
</comment>
<reference key="1">
    <citation type="submission" date="2007-03" db="EMBL/GenBank/DDBJ databases">
        <title>Complete sequence of chromosome 1 of Burkholderia vietnamiensis G4.</title>
        <authorList>
            <consortium name="US DOE Joint Genome Institute"/>
            <person name="Copeland A."/>
            <person name="Lucas S."/>
            <person name="Lapidus A."/>
            <person name="Barry K."/>
            <person name="Detter J.C."/>
            <person name="Glavina del Rio T."/>
            <person name="Hammon N."/>
            <person name="Israni S."/>
            <person name="Dalin E."/>
            <person name="Tice H."/>
            <person name="Pitluck S."/>
            <person name="Chain P."/>
            <person name="Malfatti S."/>
            <person name="Shin M."/>
            <person name="Vergez L."/>
            <person name="Schmutz J."/>
            <person name="Larimer F."/>
            <person name="Land M."/>
            <person name="Hauser L."/>
            <person name="Kyrpides N."/>
            <person name="Tiedje J."/>
            <person name="Richardson P."/>
        </authorList>
    </citation>
    <scope>NUCLEOTIDE SEQUENCE [LARGE SCALE GENOMIC DNA]</scope>
    <source>
        <strain>G4 / LMG 22486</strain>
    </source>
</reference>
<evidence type="ECO:0000255" key="1">
    <source>
        <dbReference type="HAMAP-Rule" id="MF_01554"/>
    </source>
</evidence>